<reference key="1">
    <citation type="journal article" date="2000" name="Nature">
        <title>Sequence and analysis of chromosome 3 of the plant Arabidopsis thaliana.</title>
        <authorList>
            <person name="Salanoubat M."/>
            <person name="Lemcke K."/>
            <person name="Rieger M."/>
            <person name="Ansorge W."/>
            <person name="Unseld M."/>
            <person name="Fartmann B."/>
            <person name="Valle G."/>
            <person name="Bloecker H."/>
            <person name="Perez-Alonso M."/>
            <person name="Obermaier B."/>
            <person name="Delseny M."/>
            <person name="Boutry M."/>
            <person name="Grivell L.A."/>
            <person name="Mache R."/>
            <person name="Puigdomenech P."/>
            <person name="De Simone V."/>
            <person name="Choisne N."/>
            <person name="Artiguenave F."/>
            <person name="Robert C."/>
            <person name="Brottier P."/>
            <person name="Wincker P."/>
            <person name="Cattolico L."/>
            <person name="Weissenbach J."/>
            <person name="Saurin W."/>
            <person name="Quetier F."/>
            <person name="Schaefer M."/>
            <person name="Mueller-Auer S."/>
            <person name="Gabel C."/>
            <person name="Fuchs M."/>
            <person name="Benes V."/>
            <person name="Wurmbach E."/>
            <person name="Drzonek H."/>
            <person name="Erfle H."/>
            <person name="Jordan N."/>
            <person name="Bangert S."/>
            <person name="Wiedelmann R."/>
            <person name="Kranz H."/>
            <person name="Voss H."/>
            <person name="Holland R."/>
            <person name="Brandt P."/>
            <person name="Nyakatura G."/>
            <person name="Vezzi A."/>
            <person name="D'Angelo M."/>
            <person name="Pallavicini A."/>
            <person name="Toppo S."/>
            <person name="Simionati B."/>
            <person name="Conrad A."/>
            <person name="Hornischer K."/>
            <person name="Kauer G."/>
            <person name="Loehnert T.-H."/>
            <person name="Nordsiek G."/>
            <person name="Reichelt J."/>
            <person name="Scharfe M."/>
            <person name="Schoen O."/>
            <person name="Bargues M."/>
            <person name="Terol J."/>
            <person name="Climent J."/>
            <person name="Navarro P."/>
            <person name="Collado C."/>
            <person name="Perez-Perez A."/>
            <person name="Ottenwaelder B."/>
            <person name="Duchemin D."/>
            <person name="Cooke R."/>
            <person name="Laudie M."/>
            <person name="Berger-Llauro C."/>
            <person name="Purnelle B."/>
            <person name="Masuy D."/>
            <person name="de Haan M."/>
            <person name="Maarse A.C."/>
            <person name="Alcaraz J.-P."/>
            <person name="Cottet A."/>
            <person name="Casacuberta E."/>
            <person name="Monfort A."/>
            <person name="Argiriou A."/>
            <person name="Flores M."/>
            <person name="Liguori R."/>
            <person name="Vitale D."/>
            <person name="Mannhaupt G."/>
            <person name="Haase D."/>
            <person name="Schoof H."/>
            <person name="Rudd S."/>
            <person name="Zaccaria P."/>
            <person name="Mewes H.-W."/>
            <person name="Mayer K.F.X."/>
            <person name="Kaul S."/>
            <person name="Town C.D."/>
            <person name="Koo H.L."/>
            <person name="Tallon L.J."/>
            <person name="Jenkins J."/>
            <person name="Rooney T."/>
            <person name="Rizzo M."/>
            <person name="Walts A."/>
            <person name="Utterback T."/>
            <person name="Fujii C.Y."/>
            <person name="Shea T.P."/>
            <person name="Creasy T.H."/>
            <person name="Haas B."/>
            <person name="Maiti R."/>
            <person name="Wu D."/>
            <person name="Peterson J."/>
            <person name="Van Aken S."/>
            <person name="Pai G."/>
            <person name="Militscher J."/>
            <person name="Sellers P."/>
            <person name="Gill J.E."/>
            <person name="Feldblyum T.V."/>
            <person name="Preuss D."/>
            <person name="Lin X."/>
            <person name="Nierman W.C."/>
            <person name="Salzberg S.L."/>
            <person name="White O."/>
            <person name="Venter J.C."/>
            <person name="Fraser C.M."/>
            <person name="Kaneko T."/>
            <person name="Nakamura Y."/>
            <person name="Sato S."/>
            <person name="Kato T."/>
            <person name="Asamizu E."/>
            <person name="Sasamoto S."/>
            <person name="Kimura T."/>
            <person name="Idesawa K."/>
            <person name="Kawashima K."/>
            <person name="Kishida Y."/>
            <person name="Kiyokawa C."/>
            <person name="Kohara M."/>
            <person name="Matsumoto M."/>
            <person name="Matsuno A."/>
            <person name="Muraki A."/>
            <person name="Nakayama S."/>
            <person name="Nakazaki N."/>
            <person name="Shinpo S."/>
            <person name="Takeuchi C."/>
            <person name="Wada T."/>
            <person name="Watanabe A."/>
            <person name="Yamada M."/>
            <person name="Yasuda M."/>
            <person name="Tabata S."/>
        </authorList>
    </citation>
    <scope>NUCLEOTIDE SEQUENCE [LARGE SCALE GENOMIC DNA]</scope>
    <source>
        <strain>cv. Columbia</strain>
    </source>
</reference>
<reference key="2">
    <citation type="journal article" date="2017" name="Plant J.">
        <title>Araport11: a complete reannotation of the Arabidopsis thaliana reference genome.</title>
        <authorList>
            <person name="Cheng C.Y."/>
            <person name="Krishnakumar V."/>
            <person name="Chan A.P."/>
            <person name="Thibaud-Nissen F."/>
            <person name="Schobel S."/>
            <person name="Town C.D."/>
        </authorList>
    </citation>
    <scope>GENOME REANNOTATION</scope>
    <source>
        <strain>cv. Columbia</strain>
    </source>
</reference>
<reference key="3">
    <citation type="journal article" date="2008" name="Plant Cell">
        <title>EMB2473/MIRO1, an Arabidopsis Miro GTPase, is required for embryogenesis and influences mitochondrial morphology in pollen.</title>
        <authorList>
            <person name="Yamaoka S."/>
            <person name="Leaver C.J."/>
        </authorList>
    </citation>
    <scope>TISSUE SPECIFICITY</scope>
</reference>
<reference key="4">
    <citation type="journal article" date="2011" name="PLoS ONE">
        <title>Arabidopsis thaliana MIRO1 and MIRO2 GTPases are unequally redundant in pollen tube growth and fusion of polar nuclei during female gametogenesis.</title>
        <authorList>
            <person name="Sormo C.G."/>
            <person name="Brembu T."/>
            <person name="Winge P."/>
            <person name="Bones A.M."/>
        </authorList>
    </citation>
    <scope>DEVELOPMENTAL STAGE</scope>
</reference>
<accession>Q9MA88</accession>
<sequence length="648" mass="73067">MWMGVGDSSGSPKPIRIVVVGEKGSGKSSLIMAAARNTFHPNIPSLLPYTNLPSEFFPDRIPATVIDTSSRPEDKGKVVKEVRQADAIVLTFAFDRPETLDRLSKYWLPLFRQLEVRVPIIVAGYEVDNKEAYNHFSIEQITSALMKQYREVETSIQWSAQRLDQAKDVLYYAQKAVIDPVGPVFDQENNVLKPRCIAALKRIFLLSDHNMDGILSDEELNELQKKCFDTPLVPCEIKQMKNVMQVTFPQGVNERGLTLDGFLFLNTRLIEEARIQTLWTMLRKFGYSNDLRLGDDLVPYSSFKRQADQSVELTNVAIEFLREVYEFFDSNGDNNLEPHEMGYLFETAPESPWTKPLYKDVTEENMDGGLSLEAFLSLWSLMTLIDPPRSLEYLMYIRFPSDDPSSAVRVTRKRVLDRKEKKSERKVVQCFVFGPKNAGKSALLNQFIGRSYDDDSNNNNGSTDEHYAVNMVKEPGVISDTDKTLVLKEVRIKDDGFMLSKEALAACDVAIFIYDSSDEYSWNRAVDMLAEVATIAKDSGYVFPCLMVAAKTDLDPFPVAIQESTRVTQDIGIDAPIPISSKLGDVSNLFRKILTAAENPHLNIPEIESKKKRSCKLNNRSLMAVSIGTAVLIAGLASFRLYTARKQS</sequence>
<proteinExistence type="evidence at transcript level"/>
<evidence type="ECO:0000250" key="1">
    <source>
        <dbReference type="UniProtKB" id="Q8RXF8"/>
    </source>
</evidence>
<evidence type="ECO:0000255" key="2"/>
<evidence type="ECO:0000255" key="3">
    <source>
        <dbReference type="PROSITE-ProRule" id="PRU00448"/>
    </source>
</evidence>
<evidence type="ECO:0000255" key="4">
    <source>
        <dbReference type="PROSITE-ProRule" id="PRU00757"/>
    </source>
</evidence>
<evidence type="ECO:0000269" key="5">
    <source>
    </source>
</evidence>
<evidence type="ECO:0000303" key="6">
    <source>
    </source>
</evidence>
<evidence type="ECO:0000303" key="7">
    <source>
    </source>
</evidence>
<evidence type="ECO:0000305" key="8"/>
<evidence type="ECO:0000305" key="9">
    <source>
    </source>
</evidence>
<evidence type="ECO:0000312" key="10">
    <source>
        <dbReference type="Araport" id="AT3G05310"/>
    </source>
</evidence>
<evidence type="ECO:0000312" key="11">
    <source>
        <dbReference type="EMBL" id="AAF27037.1"/>
    </source>
</evidence>
<gene>
    <name evidence="6" type="primary">MIRO3</name>
    <name evidence="10" type="ordered locus">At3g05310</name>
    <name evidence="11" type="ORF">T12H1.28</name>
</gene>
<organism>
    <name type="scientific">Arabidopsis thaliana</name>
    <name type="common">Mouse-ear cress</name>
    <dbReference type="NCBI Taxonomy" id="3702"/>
    <lineage>
        <taxon>Eukaryota</taxon>
        <taxon>Viridiplantae</taxon>
        <taxon>Streptophyta</taxon>
        <taxon>Embryophyta</taxon>
        <taxon>Tracheophyta</taxon>
        <taxon>Spermatophyta</taxon>
        <taxon>Magnoliopsida</taxon>
        <taxon>eudicotyledons</taxon>
        <taxon>Gunneridae</taxon>
        <taxon>Pentapetalae</taxon>
        <taxon>rosids</taxon>
        <taxon>malvids</taxon>
        <taxon>Brassicales</taxon>
        <taxon>Brassicaceae</taxon>
        <taxon>Camelineae</taxon>
        <taxon>Arabidopsis</taxon>
    </lineage>
</organism>
<feature type="chain" id="PRO_0000431717" description="Mitochondrial Rho GTPase 3">
    <location>
        <begin position="1"/>
        <end position="648"/>
    </location>
</feature>
<feature type="topological domain" description="Cytoplasmic" evidence="8">
    <location>
        <begin position="1"/>
        <end position="621"/>
    </location>
</feature>
<feature type="transmembrane region" description="Helical" evidence="2">
    <location>
        <begin position="622"/>
        <end position="644"/>
    </location>
</feature>
<feature type="topological domain" description="Mitochondrial intermembrane" evidence="8">
    <location>
        <begin position="645"/>
        <end position="648"/>
    </location>
</feature>
<feature type="domain" description="Miro 1" evidence="4">
    <location>
        <begin position="12"/>
        <end position="179"/>
    </location>
</feature>
<feature type="domain" description="EF-hand 1" evidence="3">
    <location>
        <begin position="195"/>
        <end position="230"/>
    </location>
</feature>
<feature type="domain" description="EF-hand 2" evidence="3">
    <location>
        <begin position="316"/>
        <end position="351"/>
    </location>
</feature>
<feature type="domain" description="Miro 2" evidence="4">
    <location>
        <begin position="425"/>
        <end position="599"/>
    </location>
</feature>
<feature type="binding site" evidence="3">
    <location>
        <position position="208"/>
    </location>
    <ligand>
        <name>Ca(2+)</name>
        <dbReference type="ChEBI" id="CHEBI:29108"/>
        <label>1</label>
    </ligand>
</feature>
<feature type="binding site" evidence="3">
    <location>
        <position position="210"/>
    </location>
    <ligand>
        <name>Ca(2+)</name>
        <dbReference type="ChEBI" id="CHEBI:29108"/>
        <label>1</label>
    </ligand>
</feature>
<feature type="binding site" evidence="3">
    <location>
        <position position="212"/>
    </location>
    <ligand>
        <name>Ca(2+)</name>
        <dbReference type="ChEBI" id="CHEBI:29108"/>
        <label>1</label>
    </ligand>
</feature>
<feature type="binding site" evidence="3">
    <location>
        <position position="219"/>
    </location>
    <ligand>
        <name>Ca(2+)</name>
        <dbReference type="ChEBI" id="CHEBI:29108"/>
        <label>1</label>
    </ligand>
</feature>
<feature type="binding site" evidence="3">
    <location>
        <position position="329"/>
    </location>
    <ligand>
        <name>Ca(2+)</name>
        <dbReference type="ChEBI" id="CHEBI:29108"/>
        <label>2</label>
    </ligand>
</feature>
<feature type="binding site" evidence="3">
    <location>
        <position position="331"/>
    </location>
    <ligand>
        <name>Ca(2+)</name>
        <dbReference type="ChEBI" id="CHEBI:29108"/>
        <label>2</label>
    </ligand>
</feature>
<feature type="binding site" evidence="3">
    <location>
        <position position="333"/>
    </location>
    <ligand>
        <name>Ca(2+)</name>
        <dbReference type="ChEBI" id="CHEBI:29108"/>
        <label>2</label>
    </ligand>
</feature>
<feature type="binding site" evidence="3">
    <location>
        <position position="335"/>
    </location>
    <ligand>
        <name>Ca(2+)</name>
        <dbReference type="ChEBI" id="CHEBI:29108"/>
        <label>2</label>
    </ligand>
</feature>
<feature type="binding site" evidence="3">
    <location>
        <position position="340"/>
    </location>
    <ligand>
        <name>Ca(2+)</name>
        <dbReference type="ChEBI" id="CHEBI:29108"/>
        <label>2</label>
    </ligand>
</feature>
<feature type="modified residue" description="Phosphoserine" evidence="1">
    <location>
        <position position="11"/>
    </location>
</feature>
<keyword id="KW-0106">Calcium</keyword>
<keyword id="KW-0342">GTP-binding</keyword>
<keyword id="KW-0378">Hydrolase</keyword>
<keyword id="KW-0472">Membrane</keyword>
<keyword id="KW-0479">Metal-binding</keyword>
<keyword id="KW-0496">Mitochondrion</keyword>
<keyword id="KW-1000">Mitochondrion outer membrane</keyword>
<keyword id="KW-0547">Nucleotide-binding</keyword>
<keyword id="KW-0597">Phosphoprotein</keyword>
<keyword id="KW-1185">Reference proteome</keyword>
<keyword id="KW-0677">Repeat</keyword>
<keyword id="KW-0812">Transmembrane</keyword>
<keyword id="KW-1133">Transmembrane helix</keyword>
<dbReference type="EC" id="3.6.5.-" evidence="8"/>
<dbReference type="EMBL" id="AC009177">
    <property type="protein sequence ID" value="AAF27037.1"/>
    <property type="molecule type" value="Genomic_DNA"/>
</dbReference>
<dbReference type="EMBL" id="CP002686">
    <property type="protein sequence ID" value="AEE74218.1"/>
    <property type="molecule type" value="Genomic_DNA"/>
</dbReference>
<dbReference type="RefSeq" id="NP_187182.1">
    <property type="nucleotide sequence ID" value="NM_111404.1"/>
</dbReference>
<dbReference type="SMR" id="Q9MA88"/>
<dbReference type="FunCoup" id="Q9MA88">
    <property type="interactions" value="2560"/>
</dbReference>
<dbReference type="STRING" id="3702.Q9MA88"/>
<dbReference type="PaxDb" id="3702-AT3G05310.1"/>
<dbReference type="EnsemblPlants" id="AT3G05310.1">
    <property type="protein sequence ID" value="AT3G05310.1"/>
    <property type="gene ID" value="AT3G05310"/>
</dbReference>
<dbReference type="GeneID" id="819695"/>
<dbReference type="Gramene" id="AT3G05310.1">
    <property type="protein sequence ID" value="AT3G05310.1"/>
    <property type="gene ID" value="AT3G05310"/>
</dbReference>
<dbReference type="KEGG" id="ath:AT3G05310"/>
<dbReference type="Araport" id="AT3G05310"/>
<dbReference type="TAIR" id="AT3G05310">
    <property type="gene designation" value="MIRO3"/>
</dbReference>
<dbReference type="eggNOG" id="KOG1707">
    <property type="taxonomic scope" value="Eukaryota"/>
</dbReference>
<dbReference type="HOGENOM" id="CLU_014255_2_1_1"/>
<dbReference type="InParanoid" id="Q9MA88"/>
<dbReference type="OMA" id="ARNTFHP"/>
<dbReference type="PhylomeDB" id="Q9MA88"/>
<dbReference type="PRO" id="PR:Q9MA88"/>
<dbReference type="Proteomes" id="UP000006548">
    <property type="component" value="Chromosome 3"/>
</dbReference>
<dbReference type="ExpressionAtlas" id="Q9MA88">
    <property type="expression patterns" value="baseline and differential"/>
</dbReference>
<dbReference type="GO" id="GO:0005741">
    <property type="term" value="C:mitochondrial outer membrane"/>
    <property type="evidence" value="ECO:0007669"/>
    <property type="project" value="UniProtKB-SubCell"/>
</dbReference>
<dbReference type="GO" id="GO:0005509">
    <property type="term" value="F:calcium ion binding"/>
    <property type="evidence" value="ECO:0007669"/>
    <property type="project" value="InterPro"/>
</dbReference>
<dbReference type="GO" id="GO:0005525">
    <property type="term" value="F:GTP binding"/>
    <property type="evidence" value="ECO:0007669"/>
    <property type="project" value="UniProtKB-KW"/>
</dbReference>
<dbReference type="GO" id="GO:0003924">
    <property type="term" value="F:GTPase activity"/>
    <property type="evidence" value="ECO:0007669"/>
    <property type="project" value="InterPro"/>
</dbReference>
<dbReference type="GO" id="GO:0007005">
    <property type="term" value="P:mitochondrion organization"/>
    <property type="evidence" value="ECO:0007669"/>
    <property type="project" value="InterPro"/>
</dbReference>
<dbReference type="CDD" id="cd01892">
    <property type="entry name" value="Miro2"/>
    <property type="match status" value="1"/>
</dbReference>
<dbReference type="FunFam" id="1.10.238.10:FF:000011">
    <property type="entry name" value="Mitochondrial Rho GTPase"/>
    <property type="match status" value="1"/>
</dbReference>
<dbReference type="FunFam" id="3.40.50.300:FF:000553">
    <property type="entry name" value="Mitochondrial Rho GTPase"/>
    <property type="match status" value="1"/>
</dbReference>
<dbReference type="Gene3D" id="1.10.238.10">
    <property type="entry name" value="EF-hand"/>
    <property type="match status" value="2"/>
</dbReference>
<dbReference type="Gene3D" id="3.40.50.300">
    <property type="entry name" value="P-loop containing nucleotide triphosphate hydrolases"/>
    <property type="match status" value="2"/>
</dbReference>
<dbReference type="InterPro" id="IPR011992">
    <property type="entry name" value="EF-hand-dom_pair"/>
</dbReference>
<dbReference type="InterPro" id="IPR018247">
    <property type="entry name" value="EF_Hand_1_Ca_BS"/>
</dbReference>
<dbReference type="InterPro" id="IPR013566">
    <property type="entry name" value="EF_hand_assoc_1"/>
</dbReference>
<dbReference type="InterPro" id="IPR013567">
    <property type="entry name" value="EF_hand_assoc_2"/>
</dbReference>
<dbReference type="InterPro" id="IPR002048">
    <property type="entry name" value="EF_hand_dom"/>
</dbReference>
<dbReference type="InterPro" id="IPR006073">
    <property type="entry name" value="GTP-bd"/>
</dbReference>
<dbReference type="InterPro" id="IPR021181">
    <property type="entry name" value="Miro"/>
</dbReference>
<dbReference type="InterPro" id="IPR052266">
    <property type="entry name" value="Miro-EF-hand_domain"/>
</dbReference>
<dbReference type="InterPro" id="IPR020860">
    <property type="entry name" value="MIRO_dom"/>
</dbReference>
<dbReference type="InterPro" id="IPR027417">
    <property type="entry name" value="P-loop_NTPase"/>
</dbReference>
<dbReference type="InterPro" id="IPR001806">
    <property type="entry name" value="Small_GTPase"/>
</dbReference>
<dbReference type="PANTHER" id="PTHR46819">
    <property type="entry name" value="EF-HAND CALCIUM-BINDING DOMAIN-CONTAINING PROTEIN 7"/>
    <property type="match status" value="1"/>
</dbReference>
<dbReference type="PANTHER" id="PTHR46819:SF1">
    <property type="entry name" value="EF-HAND CALCIUM-BINDING DOMAIN-CONTAINING PROTEIN 7"/>
    <property type="match status" value="1"/>
</dbReference>
<dbReference type="Pfam" id="PF08355">
    <property type="entry name" value="EF_assoc_1"/>
    <property type="match status" value="1"/>
</dbReference>
<dbReference type="Pfam" id="PF08356">
    <property type="entry name" value="EF_assoc_2"/>
    <property type="match status" value="1"/>
</dbReference>
<dbReference type="Pfam" id="PF01926">
    <property type="entry name" value="MMR_HSR1"/>
    <property type="match status" value="1"/>
</dbReference>
<dbReference type="Pfam" id="PF00071">
    <property type="entry name" value="Ras"/>
    <property type="match status" value="1"/>
</dbReference>
<dbReference type="PIRSF" id="PIRSF037488">
    <property type="entry name" value="Mt_Rho_GTPase"/>
    <property type="match status" value="1"/>
</dbReference>
<dbReference type="SMART" id="SM00174">
    <property type="entry name" value="RHO"/>
    <property type="match status" value="1"/>
</dbReference>
<dbReference type="SUPFAM" id="SSF47473">
    <property type="entry name" value="EF-hand"/>
    <property type="match status" value="1"/>
</dbReference>
<dbReference type="SUPFAM" id="SSF52540">
    <property type="entry name" value="P-loop containing nucleoside triphosphate hydrolases"/>
    <property type="match status" value="2"/>
</dbReference>
<dbReference type="PROSITE" id="PS00018">
    <property type="entry name" value="EF_HAND_1"/>
    <property type="match status" value="2"/>
</dbReference>
<dbReference type="PROSITE" id="PS50222">
    <property type="entry name" value="EF_HAND_2"/>
    <property type="match status" value="2"/>
</dbReference>
<dbReference type="PROSITE" id="PS51423">
    <property type="entry name" value="MIRO"/>
    <property type="match status" value="2"/>
</dbReference>
<comment type="function">
    <text evidence="1">Mitochondrial GTPase that may be involved in mitochondrion development.</text>
</comment>
<comment type="subcellular location">
    <subcellularLocation>
        <location evidence="1">Mitochondrion outer membrane</location>
        <topology evidence="8">Single-pass type IV membrane protein</topology>
    </subcellularLocation>
</comment>
<comment type="tissue specificity">
    <text evidence="5">Expressed at very low levels in roots, leaves, stems, flowers and siliques.</text>
</comment>
<comment type="developmental stage">
    <text evidence="9">Hihly expressed in both chalazal and peripheral endosperm during embryo development (from pre-globular to heart stage).</text>
</comment>
<comment type="similarity">
    <text evidence="4 8">Belongs to the mitochondrial Rho GTPase family.</text>
</comment>
<protein>
    <recommendedName>
        <fullName>Mitochondrial Rho GTPase 3</fullName>
        <shortName evidence="7">AtMIRO3</shortName>
        <ecNumber evidence="8">3.6.5.-</ecNumber>
    </recommendedName>
    <alternativeName>
        <fullName evidence="8">Miro-related GTPase 3</fullName>
    </alternativeName>
</protein>
<name>MIRO3_ARATH</name>